<protein>
    <recommendedName>
        <fullName evidence="1">Probable potassium transport system protein Kup</fullName>
    </recommendedName>
</protein>
<evidence type="ECO:0000255" key="1">
    <source>
        <dbReference type="HAMAP-Rule" id="MF_01522"/>
    </source>
</evidence>
<comment type="function">
    <text evidence="1">Transport of potassium into the cell. Likely operates as a K(+):H(+) symporter.</text>
</comment>
<comment type="catalytic activity">
    <reaction evidence="1">
        <text>K(+)(in) + H(+)(in) = K(+)(out) + H(+)(out)</text>
        <dbReference type="Rhea" id="RHEA:28490"/>
        <dbReference type="ChEBI" id="CHEBI:15378"/>
        <dbReference type="ChEBI" id="CHEBI:29103"/>
    </reaction>
    <physiologicalReaction direction="right-to-left" evidence="1">
        <dbReference type="Rhea" id="RHEA:28492"/>
    </physiologicalReaction>
</comment>
<comment type="subcellular location">
    <subcellularLocation>
        <location evidence="1">Cell inner membrane</location>
        <topology evidence="1">Multi-pass membrane protein</topology>
    </subcellularLocation>
</comment>
<comment type="similarity">
    <text evidence="1">Belongs to the HAK/KUP transporter (TC 2.A.72) family.</text>
</comment>
<accession>Q3KH21</accession>
<proteinExistence type="inferred from homology"/>
<name>KUP_PSEPF</name>
<feature type="chain" id="PRO_0000279811" description="Probable potassium transport system protein Kup">
    <location>
        <begin position="1"/>
        <end position="633"/>
    </location>
</feature>
<feature type="transmembrane region" description="Helical" evidence="1">
    <location>
        <begin position="21"/>
        <end position="41"/>
    </location>
</feature>
<feature type="transmembrane region" description="Helical" evidence="1">
    <location>
        <begin position="61"/>
        <end position="81"/>
    </location>
</feature>
<feature type="transmembrane region" description="Helical" evidence="1">
    <location>
        <begin position="112"/>
        <end position="132"/>
    </location>
</feature>
<feature type="transmembrane region" description="Helical" evidence="1">
    <location>
        <begin position="149"/>
        <end position="169"/>
    </location>
</feature>
<feature type="transmembrane region" description="Helical" evidence="1">
    <location>
        <begin position="176"/>
        <end position="196"/>
    </location>
</feature>
<feature type="transmembrane region" description="Helical" evidence="1">
    <location>
        <begin position="217"/>
        <end position="237"/>
    </location>
</feature>
<feature type="transmembrane region" description="Helical" evidence="1">
    <location>
        <begin position="258"/>
        <end position="278"/>
    </location>
</feature>
<feature type="transmembrane region" description="Helical" evidence="1">
    <location>
        <begin position="290"/>
        <end position="310"/>
    </location>
</feature>
<feature type="transmembrane region" description="Helical" evidence="1">
    <location>
        <begin position="348"/>
        <end position="368"/>
    </location>
</feature>
<feature type="transmembrane region" description="Helical" evidence="1">
    <location>
        <begin position="377"/>
        <end position="397"/>
    </location>
</feature>
<feature type="transmembrane region" description="Helical" evidence="1">
    <location>
        <begin position="398"/>
        <end position="418"/>
    </location>
</feature>
<feature type="transmembrane region" description="Helical" evidence="1">
    <location>
        <begin position="430"/>
        <end position="450"/>
    </location>
</feature>
<dbReference type="EMBL" id="CP000094">
    <property type="protein sequence ID" value="ABA72935.1"/>
    <property type="molecule type" value="Genomic_DNA"/>
</dbReference>
<dbReference type="RefSeq" id="WP_011332754.1">
    <property type="nucleotide sequence ID" value="NC_007492.2"/>
</dbReference>
<dbReference type="KEGG" id="pfo:Pfl01_1192"/>
<dbReference type="eggNOG" id="COG3158">
    <property type="taxonomic scope" value="Bacteria"/>
</dbReference>
<dbReference type="HOGENOM" id="CLU_008142_4_2_6"/>
<dbReference type="Proteomes" id="UP000002704">
    <property type="component" value="Chromosome"/>
</dbReference>
<dbReference type="GO" id="GO:0005886">
    <property type="term" value="C:plasma membrane"/>
    <property type="evidence" value="ECO:0007669"/>
    <property type="project" value="UniProtKB-SubCell"/>
</dbReference>
<dbReference type="GO" id="GO:0015079">
    <property type="term" value="F:potassium ion transmembrane transporter activity"/>
    <property type="evidence" value="ECO:0007669"/>
    <property type="project" value="UniProtKB-UniRule"/>
</dbReference>
<dbReference type="GO" id="GO:0015293">
    <property type="term" value="F:symporter activity"/>
    <property type="evidence" value="ECO:0007669"/>
    <property type="project" value="UniProtKB-UniRule"/>
</dbReference>
<dbReference type="HAMAP" id="MF_01522">
    <property type="entry name" value="Kup"/>
    <property type="match status" value="1"/>
</dbReference>
<dbReference type="InterPro" id="IPR003855">
    <property type="entry name" value="K+_transporter"/>
</dbReference>
<dbReference type="InterPro" id="IPR053952">
    <property type="entry name" value="K_trans_C"/>
</dbReference>
<dbReference type="InterPro" id="IPR053951">
    <property type="entry name" value="K_trans_N"/>
</dbReference>
<dbReference type="InterPro" id="IPR023051">
    <property type="entry name" value="Kup"/>
</dbReference>
<dbReference type="PANTHER" id="PTHR30540:SF79">
    <property type="entry name" value="LOW AFFINITY POTASSIUM TRANSPORT SYSTEM PROTEIN KUP"/>
    <property type="match status" value="1"/>
</dbReference>
<dbReference type="PANTHER" id="PTHR30540">
    <property type="entry name" value="OSMOTIC STRESS POTASSIUM TRANSPORTER"/>
    <property type="match status" value="1"/>
</dbReference>
<dbReference type="Pfam" id="PF02705">
    <property type="entry name" value="K_trans"/>
    <property type="match status" value="1"/>
</dbReference>
<dbReference type="Pfam" id="PF22776">
    <property type="entry name" value="K_trans_C"/>
    <property type="match status" value="1"/>
</dbReference>
<sequence length="633" mass="68552">MGQASSHAAGAEGSATKPLSMLVAAVGVVYGDIGTSPLYTLKEVFSGAYGVPVNHDGVLGILSLIFWSLIWVVSIKYMMFVLRADNQGEGGIMALTALARRAAAGRKRLRTLLVVCGLIGAALFYGDSMITPAISVLSAIEGLGLAFDGIDHWVVPLSLVVLVGLFLIQKHGTARIGILFGPIMVTWFLVLGALGVYGISHYPEVLHAMNPVWAVRFFMVHTGMGVAILGAVVLALTGAEALYADMGHFGRKPIARAWFLLVLPALVLNYFGQGALLLENPDAARNPFYLLAPSWALIPLVGLSTLATVIASQAVISGAFSLTRQAIQLGYIPRMYIQHTSSDEQGQIYIGAVNWSLMVGVVLLVIGFESSGALASAYGVAVTGTMLMTTILVSAVMLLLWKWPPILAVPVLIGFLLVDGLYFAANVPKIVQGGAFPVIAGIALFVLMTTWKRGKQLLVERLDEGALPLPIFISSIRVQPPHRVQGTAVFLTARSDAVPHALLHNLLHNQVLHEQVVLLTVVYEDIPRVPPSRRFEVEAHGEGFFRVILHFGFTDEPDVPQALKLCHLDDLDFSPMRTTYFLSRETVIASKLEGMARWREALFAFMLKNANGNLRFFNLPLNRVIELGTQVEM</sequence>
<reference key="1">
    <citation type="journal article" date="2009" name="Genome Biol.">
        <title>Genomic and genetic analyses of diversity and plant interactions of Pseudomonas fluorescens.</title>
        <authorList>
            <person name="Silby M.W."/>
            <person name="Cerdeno-Tarraga A.M."/>
            <person name="Vernikos G.S."/>
            <person name="Giddens S.R."/>
            <person name="Jackson R.W."/>
            <person name="Preston G.M."/>
            <person name="Zhang X.-X."/>
            <person name="Moon C.D."/>
            <person name="Gehrig S.M."/>
            <person name="Godfrey S.A.C."/>
            <person name="Knight C.G."/>
            <person name="Malone J.G."/>
            <person name="Robinson Z."/>
            <person name="Spiers A.J."/>
            <person name="Harris S."/>
            <person name="Challis G.L."/>
            <person name="Yaxley A.M."/>
            <person name="Harris D."/>
            <person name="Seeger K."/>
            <person name="Murphy L."/>
            <person name="Rutter S."/>
            <person name="Squares R."/>
            <person name="Quail M.A."/>
            <person name="Saunders E."/>
            <person name="Mavromatis K."/>
            <person name="Brettin T.S."/>
            <person name="Bentley S.D."/>
            <person name="Hothersall J."/>
            <person name="Stephens E."/>
            <person name="Thomas C.M."/>
            <person name="Parkhill J."/>
            <person name="Levy S.B."/>
            <person name="Rainey P.B."/>
            <person name="Thomson N.R."/>
        </authorList>
    </citation>
    <scope>NUCLEOTIDE SEQUENCE [LARGE SCALE GENOMIC DNA]</scope>
    <source>
        <strain>Pf0-1</strain>
    </source>
</reference>
<organism>
    <name type="scientific">Pseudomonas fluorescens (strain Pf0-1)</name>
    <dbReference type="NCBI Taxonomy" id="205922"/>
    <lineage>
        <taxon>Bacteria</taxon>
        <taxon>Pseudomonadati</taxon>
        <taxon>Pseudomonadota</taxon>
        <taxon>Gammaproteobacteria</taxon>
        <taxon>Pseudomonadales</taxon>
        <taxon>Pseudomonadaceae</taxon>
        <taxon>Pseudomonas</taxon>
    </lineage>
</organism>
<gene>
    <name evidence="1" type="primary">kup</name>
    <name type="ordered locus">Pfl01_1192</name>
</gene>
<keyword id="KW-0997">Cell inner membrane</keyword>
<keyword id="KW-1003">Cell membrane</keyword>
<keyword id="KW-0406">Ion transport</keyword>
<keyword id="KW-0472">Membrane</keyword>
<keyword id="KW-0630">Potassium</keyword>
<keyword id="KW-0633">Potassium transport</keyword>
<keyword id="KW-0769">Symport</keyword>
<keyword id="KW-0812">Transmembrane</keyword>
<keyword id="KW-1133">Transmembrane helix</keyword>
<keyword id="KW-0813">Transport</keyword>